<protein>
    <recommendedName>
        <fullName>Uncharacterized protein C16E8.12c</fullName>
    </recommendedName>
</protein>
<name>YDRC_SCHPO</name>
<sequence>MAKPKKENDLDLLIQLADALEAIPGDLSKNFTEVRFLEAELKDVYSQALSSIDDLLNRDTSVERRNLVARNLSLLLKSDDVQTRKKSHIAMYAEAITHSNVLRLEHCYQKMEMKLPNFFIPFTPEVIKEQKTSRPIRASRRRANLRNRRAKELLAAENASEEGDKKQIITDSGKLPETEELTETTNEDLDIKQFSPYSSESSANVSSYNKS</sequence>
<gene>
    <name type="ORF">SPAC16E8.12c</name>
</gene>
<proteinExistence type="predicted"/>
<dbReference type="EMBL" id="CU329670">
    <property type="protein sequence ID" value="CAC37432.2"/>
    <property type="molecule type" value="Genomic_DNA"/>
</dbReference>
<dbReference type="PIR" id="T37792">
    <property type="entry name" value="T37792"/>
</dbReference>
<dbReference type="RefSeq" id="NP_594225.2">
    <property type="nucleotide sequence ID" value="NM_001019648.3"/>
</dbReference>
<dbReference type="SMR" id="Q9C117"/>
<dbReference type="BioGRID" id="278801">
    <property type="interactions" value="10"/>
</dbReference>
<dbReference type="STRING" id="284812.Q9C117"/>
<dbReference type="iPTMnet" id="Q9C117"/>
<dbReference type="PaxDb" id="4896-SPAC16E8.12c.1"/>
<dbReference type="EnsemblFungi" id="SPAC16E8.12c.1">
    <property type="protein sequence ID" value="SPAC16E8.12c.1:pep"/>
    <property type="gene ID" value="SPAC16E8.12c"/>
</dbReference>
<dbReference type="PomBase" id="SPAC16E8.12c"/>
<dbReference type="VEuPathDB" id="FungiDB:SPAC16E8.12c"/>
<dbReference type="HOGENOM" id="CLU_1305486_0_0_1"/>
<dbReference type="InParanoid" id="Q9C117"/>
<dbReference type="OMA" id="SKIHCLE"/>
<dbReference type="PRO" id="PR:Q9C117"/>
<dbReference type="Proteomes" id="UP000002485">
    <property type="component" value="Chromosome I"/>
</dbReference>
<dbReference type="GO" id="GO:0000785">
    <property type="term" value="C:chromatin"/>
    <property type="evidence" value="ECO:0000353"/>
    <property type="project" value="PomBase"/>
</dbReference>
<dbReference type="GO" id="GO:0005634">
    <property type="term" value="C:nucleus"/>
    <property type="evidence" value="ECO:0000353"/>
    <property type="project" value="PomBase"/>
</dbReference>
<dbReference type="GO" id="GO:0045815">
    <property type="term" value="P:transcription initiation-coupled chromatin remodeling"/>
    <property type="evidence" value="ECO:0000315"/>
    <property type="project" value="PomBase"/>
</dbReference>
<dbReference type="InterPro" id="IPR024610">
    <property type="entry name" value="ING_N_histone-binding"/>
</dbReference>
<dbReference type="Pfam" id="PF12998">
    <property type="entry name" value="ING"/>
    <property type="match status" value="1"/>
</dbReference>
<dbReference type="SMART" id="SM01408">
    <property type="entry name" value="ING"/>
    <property type="match status" value="1"/>
</dbReference>
<feature type="chain" id="PRO_0000304005" description="Uncharacterized protein C16E8.12c">
    <location>
        <begin position="1"/>
        <end position="211"/>
    </location>
</feature>
<feature type="region of interest" description="Disordered" evidence="1">
    <location>
        <begin position="155"/>
        <end position="211"/>
    </location>
</feature>
<feature type="compositionally biased region" description="Acidic residues" evidence="1">
    <location>
        <begin position="178"/>
        <end position="188"/>
    </location>
</feature>
<feature type="compositionally biased region" description="Low complexity" evidence="1">
    <location>
        <begin position="195"/>
        <end position="211"/>
    </location>
</feature>
<keyword id="KW-1185">Reference proteome</keyword>
<evidence type="ECO:0000256" key="1">
    <source>
        <dbReference type="SAM" id="MobiDB-lite"/>
    </source>
</evidence>
<reference key="1">
    <citation type="journal article" date="2002" name="Nature">
        <title>The genome sequence of Schizosaccharomyces pombe.</title>
        <authorList>
            <person name="Wood V."/>
            <person name="Gwilliam R."/>
            <person name="Rajandream M.A."/>
            <person name="Lyne M.H."/>
            <person name="Lyne R."/>
            <person name="Stewart A."/>
            <person name="Sgouros J.G."/>
            <person name="Peat N."/>
            <person name="Hayles J."/>
            <person name="Baker S.G."/>
            <person name="Basham D."/>
            <person name="Bowman S."/>
            <person name="Brooks K."/>
            <person name="Brown D."/>
            <person name="Brown S."/>
            <person name="Chillingworth T."/>
            <person name="Churcher C.M."/>
            <person name="Collins M."/>
            <person name="Connor R."/>
            <person name="Cronin A."/>
            <person name="Davis P."/>
            <person name="Feltwell T."/>
            <person name="Fraser A."/>
            <person name="Gentles S."/>
            <person name="Goble A."/>
            <person name="Hamlin N."/>
            <person name="Harris D.E."/>
            <person name="Hidalgo J."/>
            <person name="Hodgson G."/>
            <person name="Holroyd S."/>
            <person name="Hornsby T."/>
            <person name="Howarth S."/>
            <person name="Huckle E.J."/>
            <person name="Hunt S."/>
            <person name="Jagels K."/>
            <person name="James K.D."/>
            <person name="Jones L."/>
            <person name="Jones M."/>
            <person name="Leather S."/>
            <person name="McDonald S."/>
            <person name="McLean J."/>
            <person name="Mooney P."/>
            <person name="Moule S."/>
            <person name="Mungall K.L."/>
            <person name="Murphy L.D."/>
            <person name="Niblett D."/>
            <person name="Odell C."/>
            <person name="Oliver K."/>
            <person name="O'Neil S."/>
            <person name="Pearson D."/>
            <person name="Quail M.A."/>
            <person name="Rabbinowitsch E."/>
            <person name="Rutherford K.M."/>
            <person name="Rutter S."/>
            <person name="Saunders D."/>
            <person name="Seeger K."/>
            <person name="Sharp S."/>
            <person name="Skelton J."/>
            <person name="Simmonds M.N."/>
            <person name="Squares R."/>
            <person name="Squares S."/>
            <person name="Stevens K."/>
            <person name="Taylor K."/>
            <person name="Taylor R.G."/>
            <person name="Tivey A."/>
            <person name="Walsh S.V."/>
            <person name="Warren T."/>
            <person name="Whitehead S."/>
            <person name="Woodward J.R."/>
            <person name="Volckaert G."/>
            <person name="Aert R."/>
            <person name="Robben J."/>
            <person name="Grymonprez B."/>
            <person name="Weltjens I."/>
            <person name="Vanstreels E."/>
            <person name="Rieger M."/>
            <person name="Schaefer M."/>
            <person name="Mueller-Auer S."/>
            <person name="Gabel C."/>
            <person name="Fuchs M."/>
            <person name="Duesterhoeft A."/>
            <person name="Fritzc C."/>
            <person name="Holzer E."/>
            <person name="Moestl D."/>
            <person name="Hilbert H."/>
            <person name="Borzym K."/>
            <person name="Langer I."/>
            <person name="Beck A."/>
            <person name="Lehrach H."/>
            <person name="Reinhardt R."/>
            <person name="Pohl T.M."/>
            <person name="Eger P."/>
            <person name="Zimmermann W."/>
            <person name="Wedler H."/>
            <person name="Wambutt R."/>
            <person name="Purnelle B."/>
            <person name="Goffeau A."/>
            <person name="Cadieu E."/>
            <person name="Dreano S."/>
            <person name="Gloux S."/>
            <person name="Lelaure V."/>
            <person name="Mottier S."/>
            <person name="Galibert F."/>
            <person name="Aves S.J."/>
            <person name="Xiang Z."/>
            <person name="Hunt C."/>
            <person name="Moore K."/>
            <person name="Hurst S.M."/>
            <person name="Lucas M."/>
            <person name="Rochet M."/>
            <person name="Gaillardin C."/>
            <person name="Tallada V.A."/>
            <person name="Garzon A."/>
            <person name="Thode G."/>
            <person name="Daga R.R."/>
            <person name="Cruzado L."/>
            <person name="Jimenez J."/>
            <person name="Sanchez M."/>
            <person name="del Rey F."/>
            <person name="Benito J."/>
            <person name="Dominguez A."/>
            <person name="Revuelta J.L."/>
            <person name="Moreno S."/>
            <person name="Armstrong J."/>
            <person name="Forsburg S.L."/>
            <person name="Cerutti L."/>
            <person name="Lowe T."/>
            <person name="McCombie W.R."/>
            <person name="Paulsen I."/>
            <person name="Potashkin J."/>
            <person name="Shpakovski G.V."/>
            <person name="Ussery D."/>
            <person name="Barrell B.G."/>
            <person name="Nurse P."/>
        </authorList>
    </citation>
    <scope>NUCLEOTIDE SEQUENCE [LARGE SCALE GENOMIC DNA]</scope>
    <source>
        <strain>972 / ATCC 24843</strain>
    </source>
</reference>
<accession>Q9C117</accession>
<organism>
    <name type="scientific">Schizosaccharomyces pombe (strain 972 / ATCC 24843)</name>
    <name type="common">Fission yeast</name>
    <dbReference type="NCBI Taxonomy" id="284812"/>
    <lineage>
        <taxon>Eukaryota</taxon>
        <taxon>Fungi</taxon>
        <taxon>Dikarya</taxon>
        <taxon>Ascomycota</taxon>
        <taxon>Taphrinomycotina</taxon>
        <taxon>Schizosaccharomycetes</taxon>
        <taxon>Schizosaccharomycetales</taxon>
        <taxon>Schizosaccharomycetaceae</taxon>
        <taxon>Schizosaccharomyces</taxon>
    </lineage>
</organism>